<evidence type="ECO:0000255" key="1">
    <source>
        <dbReference type="HAMAP-Rule" id="MF_00363"/>
    </source>
</evidence>
<protein>
    <recommendedName>
        <fullName evidence="1">UPF0154 protein SZO_03240</fullName>
    </recommendedName>
</protein>
<name>Y324_STRS7</name>
<accession>C0MGG4</accession>
<proteinExistence type="inferred from homology"/>
<gene>
    <name type="ordered locus">SZO_03240</name>
</gene>
<keyword id="KW-1003">Cell membrane</keyword>
<keyword id="KW-0472">Membrane</keyword>
<keyword id="KW-0812">Transmembrane</keyword>
<keyword id="KW-1133">Transmembrane helix</keyword>
<organism>
    <name type="scientific">Streptococcus equi subsp. zooepidemicus (strain H70)</name>
    <dbReference type="NCBI Taxonomy" id="553483"/>
    <lineage>
        <taxon>Bacteria</taxon>
        <taxon>Bacillati</taxon>
        <taxon>Bacillota</taxon>
        <taxon>Bacilli</taxon>
        <taxon>Lactobacillales</taxon>
        <taxon>Streptococcaceae</taxon>
        <taxon>Streptococcus</taxon>
    </lineage>
</organism>
<comment type="subcellular location">
    <subcellularLocation>
        <location evidence="1">Cell membrane</location>
        <topology evidence="1">Single-pass membrane protein</topology>
    </subcellularLocation>
</comment>
<comment type="similarity">
    <text evidence="1">Belongs to the UPF0154 family.</text>
</comment>
<reference key="1">
    <citation type="journal article" date="2009" name="PLoS Pathog.">
        <title>Genomic evidence for the evolution of Streptococcus equi: host restriction, increased virulence, and genetic exchange with human pathogens.</title>
        <authorList>
            <person name="Holden M.T.G."/>
            <person name="Heather Z."/>
            <person name="Paillot R."/>
            <person name="Steward K.F."/>
            <person name="Webb K."/>
            <person name="Ainslie F."/>
            <person name="Jourdan T."/>
            <person name="Bason N.C."/>
            <person name="Holroyd N.E."/>
            <person name="Mungall K."/>
            <person name="Quail M.A."/>
            <person name="Sanders M."/>
            <person name="Simmonds M."/>
            <person name="Willey D."/>
            <person name="Brooks K."/>
            <person name="Aanensen D.M."/>
            <person name="Spratt B.G."/>
            <person name="Jolley K.A."/>
            <person name="Maiden M.C.J."/>
            <person name="Kehoe M."/>
            <person name="Chanter N."/>
            <person name="Bentley S.D."/>
            <person name="Robinson C."/>
            <person name="Maskell D.J."/>
            <person name="Parkhill J."/>
            <person name="Waller A.S."/>
        </authorList>
    </citation>
    <scope>NUCLEOTIDE SEQUENCE [LARGE SCALE GENOMIC DNA]</scope>
    <source>
        <strain>H70</strain>
    </source>
</reference>
<dbReference type="EMBL" id="FM204884">
    <property type="protein sequence ID" value="CAW98142.1"/>
    <property type="molecule type" value="Genomic_DNA"/>
</dbReference>
<dbReference type="SMR" id="C0MGG4"/>
<dbReference type="KEGG" id="seq:SZO_03240"/>
<dbReference type="eggNOG" id="COG3763">
    <property type="taxonomic scope" value="Bacteria"/>
</dbReference>
<dbReference type="HOGENOM" id="CLU_180108_0_0_9"/>
<dbReference type="Proteomes" id="UP000001368">
    <property type="component" value="Chromosome"/>
</dbReference>
<dbReference type="GO" id="GO:0005886">
    <property type="term" value="C:plasma membrane"/>
    <property type="evidence" value="ECO:0007669"/>
    <property type="project" value="UniProtKB-SubCell"/>
</dbReference>
<dbReference type="HAMAP" id="MF_00363">
    <property type="entry name" value="UPF0154"/>
    <property type="match status" value="1"/>
</dbReference>
<dbReference type="InterPro" id="IPR005359">
    <property type="entry name" value="UPF0154"/>
</dbReference>
<dbReference type="Pfam" id="PF03672">
    <property type="entry name" value="UPF0154"/>
    <property type="match status" value="1"/>
</dbReference>
<sequence length="80" mass="8956">MSTAIWILLIIVALTAGLFGGIFIARKQIEKEIGEHPRLTPEAIREMMSQMGQKPSEAKIQQTYRNIVKQSKAAMTKGKK</sequence>
<feature type="chain" id="PRO_1000205458" description="UPF0154 protein SZO_03240">
    <location>
        <begin position="1"/>
        <end position="80"/>
    </location>
</feature>
<feature type="transmembrane region" description="Helical" evidence="1">
    <location>
        <begin position="4"/>
        <end position="24"/>
    </location>
</feature>